<comment type="function">
    <text evidence="1">Methyltransferase required for the conversion of demethylmenaquinol (DMKH2) to menaquinol (MKH2) and the conversion of 2-polyprenyl-6-methoxy-1,4-benzoquinol (DDMQH2) to 2-polyprenyl-3-methyl-6-methoxy-1,4-benzoquinol (DMQH2).</text>
</comment>
<comment type="catalytic activity">
    <reaction evidence="1">
        <text>a 2-demethylmenaquinol + S-adenosyl-L-methionine = a menaquinol + S-adenosyl-L-homocysteine + H(+)</text>
        <dbReference type="Rhea" id="RHEA:42640"/>
        <dbReference type="Rhea" id="RHEA-COMP:9539"/>
        <dbReference type="Rhea" id="RHEA-COMP:9563"/>
        <dbReference type="ChEBI" id="CHEBI:15378"/>
        <dbReference type="ChEBI" id="CHEBI:18151"/>
        <dbReference type="ChEBI" id="CHEBI:55437"/>
        <dbReference type="ChEBI" id="CHEBI:57856"/>
        <dbReference type="ChEBI" id="CHEBI:59789"/>
        <dbReference type="EC" id="2.1.1.163"/>
    </reaction>
</comment>
<comment type="catalytic activity">
    <reaction evidence="1">
        <text>a 2-methoxy-6-(all-trans-polyprenyl)benzene-1,4-diol + S-adenosyl-L-methionine = a 5-methoxy-2-methyl-3-(all-trans-polyprenyl)benzene-1,4-diol + S-adenosyl-L-homocysteine + H(+)</text>
        <dbReference type="Rhea" id="RHEA:28286"/>
        <dbReference type="Rhea" id="RHEA-COMP:10858"/>
        <dbReference type="Rhea" id="RHEA-COMP:10859"/>
        <dbReference type="ChEBI" id="CHEBI:15378"/>
        <dbReference type="ChEBI" id="CHEBI:57856"/>
        <dbReference type="ChEBI" id="CHEBI:59789"/>
        <dbReference type="ChEBI" id="CHEBI:84166"/>
        <dbReference type="ChEBI" id="CHEBI:84167"/>
        <dbReference type="EC" id="2.1.1.201"/>
    </reaction>
</comment>
<comment type="pathway">
    <text evidence="1">Quinol/quinone metabolism; menaquinone biosynthesis; menaquinol from 1,4-dihydroxy-2-naphthoate: step 2/2.</text>
</comment>
<comment type="pathway">
    <text evidence="1">Cofactor biosynthesis; ubiquinone biosynthesis.</text>
</comment>
<comment type="similarity">
    <text evidence="1">Belongs to the class I-like SAM-binding methyltransferase superfamily. MenG/UbiE family.</text>
</comment>
<gene>
    <name evidence="1" type="primary">ubiE</name>
    <name type="ordered locus">RMA_1069</name>
</gene>
<keyword id="KW-0474">Menaquinone biosynthesis</keyword>
<keyword id="KW-0489">Methyltransferase</keyword>
<keyword id="KW-0949">S-adenosyl-L-methionine</keyword>
<keyword id="KW-0808">Transferase</keyword>
<keyword id="KW-0831">Ubiquinone biosynthesis</keyword>
<reference key="1">
    <citation type="journal article" date="2007" name="Genome Res.">
        <title>Lateral gene transfer between obligate intracellular bacteria: evidence from the Rickettsia massiliae genome.</title>
        <authorList>
            <person name="Blanc G."/>
            <person name="Ogata H."/>
            <person name="Robert C."/>
            <person name="Audic S."/>
            <person name="Claverie J.-M."/>
            <person name="Raoult D."/>
        </authorList>
    </citation>
    <scope>NUCLEOTIDE SEQUENCE [LARGE SCALE GENOMIC DNA]</scope>
    <source>
        <strain>Mtu5</strain>
    </source>
</reference>
<sequence length="248" mass="28284">MNQTNFGLKKVDYTKKQGLVNNVFSNVADKYDLMNDLMSLGLHRLWKDEFIRQIPNLNSHILDVASGSGDIALKLAKKARDRVNNISLTLSDINEEMLKQAKKKAIDLNLFQNLKFTVASAEELPFPDDSFDYYTIAFGIRNVPDINKALKEACRVLKPMGKFICLEFSKVKEGYIKDFYKFYSFNIIPSIGQMIVGNKEAYEYLVESIELFPSQDEFRIMIKDAGFEEVGYKNLSGGIVAIHSAYTR</sequence>
<protein>
    <recommendedName>
        <fullName evidence="1">Ubiquinone/menaquinone biosynthesis C-methyltransferase UbiE</fullName>
        <ecNumber evidence="1">2.1.1.163</ecNumber>
        <ecNumber evidence="1">2.1.1.201</ecNumber>
    </recommendedName>
    <alternativeName>
        <fullName evidence="1">2-methoxy-6-polyprenyl-1,4-benzoquinol methylase</fullName>
    </alternativeName>
    <alternativeName>
        <fullName evidence="1">Demethylmenaquinone methyltransferase</fullName>
    </alternativeName>
</protein>
<organism>
    <name type="scientific">Rickettsia massiliae (strain Mtu5)</name>
    <dbReference type="NCBI Taxonomy" id="416276"/>
    <lineage>
        <taxon>Bacteria</taxon>
        <taxon>Pseudomonadati</taxon>
        <taxon>Pseudomonadota</taxon>
        <taxon>Alphaproteobacteria</taxon>
        <taxon>Rickettsiales</taxon>
        <taxon>Rickettsiaceae</taxon>
        <taxon>Rickettsieae</taxon>
        <taxon>Rickettsia</taxon>
        <taxon>spotted fever group</taxon>
    </lineage>
</organism>
<feature type="chain" id="PRO_1000070201" description="Ubiquinone/menaquinone biosynthesis C-methyltransferase UbiE">
    <location>
        <begin position="1"/>
        <end position="248"/>
    </location>
</feature>
<feature type="binding site" evidence="1">
    <location>
        <position position="68"/>
    </location>
    <ligand>
        <name>S-adenosyl-L-methionine</name>
        <dbReference type="ChEBI" id="CHEBI:59789"/>
    </ligand>
</feature>
<feature type="binding site" evidence="1">
    <location>
        <position position="92"/>
    </location>
    <ligand>
        <name>S-adenosyl-L-methionine</name>
        <dbReference type="ChEBI" id="CHEBI:59789"/>
    </ligand>
</feature>
<dbReference type="EC" id="2.1.1.163" evidence="1"/>
<dbReference type="EC" id="2.1.1.201" evidence="1"/>
<dbReference type="EMBL" id="CP000683">
    <property type="protein sequence ID" value="ABV85105.1"/>
    <property type="molecule type" value="Genomic_DNA"/>
</dbReference>
<dbReference type="RefSeq" id="WP_012153071.1">
    <property type="nucleotide sequence ID" value="NC_009900.1"/>
</dbReference>
<dbReference type="SMR" id="A8F2G9"/>
<dbReference type="KEGG" id="rms:RMA_1069"/>
<dbReference type="HOGENOM" id="CLU_037990_0_1_5"/>
<dbReference type="UniPathway" id="UPA00079">
    <property type="reaction ID" value="UER00169"/>
</dbReference>
<dbReference type="UniPathway" id="UPA00232"/>
<dbReference type="Proteomes" id="UP000001311">
    <property type="component" value="Chromosome"/>
</dbReference>
<dbReference type="GO" id="GO:0008425">
    <property type="term" value="F:2-methoxy-6-polyprenyl-1,4-benzoquinol methyltransferase activity"/>
    <property type="evidence" value="ECO:0007669"/>
    <property type="project" value="UniProtKB-UniRule"/>
</dbReference>
<dbReference type="GO" id="GO:0043770">
    <property type="term" value="F:demethylmenaquinone methyltransferase activity"/>
    <property type="evidence" value="ECO:0007669"/>
    <property type="project" value="UniProtKB-UniRule"/>
</dbReference>
<dbReference type="GO" id="GO:0009060">
    <property type="term" value="P:aerobic respiration"/>
    <property type="evidence" value="ECO:0007669"/>
    <property type="project" value="UniProtKB-UniRule"/>
</dbReference>
<dbReference type="GO" id="GO:0009234">
    <property type="term" value="P:menaquinone biosynthetic process"/>
    <property type="evidence" value="ECO:0007669"/>
    <property type="project" value="UniProtKB-UniRule"/>
</dbReference>
<dbReference type="GO" id="GO:0032259">
    <property type="term" value="P:methylation"/>
    <property type="evidence" value="ECO:0007669"/>
    <property type="project" value="UniProtKB-KW"/>
</dbReference>
<dbReference type="CDD" id="cd02440">
    <property type="entry name" value="AdoMet_MTases"/>
    <property type="match status" value="1"/>
</dbReference>
<dbReference type="FunFam" id="3.40.50.150:FF:000250">
    <property type="entry name" value="Ubiquinone/menaquinone biosynthesis C-methyltransferase UbiE"/>
    <property type="match status" value="1"/>
</dbReference>
<dbReference type="Gene3D" id="3.40.50.150">
    <property type="entry name" value="Vaccinia Virus protein VP39"/>
    <property type="match status" value="1"/>
</dbReference>
<dbReference type="HAMAP" id="MF_01813">
    <property type="entry name" value="MenG_UbiE_methyltr"/>
    <property type="match status" value="1"/>
</dbReference>
<dbReference type="InterPro" id="IPR029063">
    <property type="entry name" value="SAM-dependent_MTases_sf"/>
</dbReference>
<dbReference type="InterPro" id="IPR004033">
    <property type="entry name" value="UbiE/COQ5_MeTrFase"/>
</dbReference>
<dbReference type="InterPro" id="IPR023576">
    <property type="entry name" value="UbiE/COQ5_MeTrFase_CS"/>
</dbReference>
<dbReference type="NCBIfam" id="TIGR01934">
    <property type="entry name" value="MenG_MenH_UbiE"/>
    <property type="match status" value="1"/>
</dbReference>
<dbReference type="NCBIfam" id="NF001242">
    <property type="entry name" value="PRK00216.1-3"/>
    <property type="match status" value="1"/>
</dbReference>
<dbReference type="NCBIfam" id="NF001244">
    <property type="entry name" value="PRK00216.1-5"/>
    <property type="match status" value="1"/>
</dbReference>
<dbReference type="PANTHER" id="PTHR43591:SF24">
    <property type="entry name" value="2-METHOXY-6-POLYPRENYL-1,4-BENZOQUINOL METHYLASE, MITOCHONDRIAL"/>
    <property type="match status" value="1"/>
</dbReference>
<dbReference type="PANTHER" id="PTHR43591">
    <property type="entry name" value="METHYLTRANSFERASE"/>
    <property type="match status" value="1"/>
</dbReference>
<dbReference type="Pfam" id="PF01209">
    <property type="entry name" value="Ubie_methyltran"/>
    <property type="match status" value="1"/>
</dbReference>
<dbReference type="SUPFAM" id="SSF53335">
    <property type="entry name" value="S-adenosyl-L-methionine-dependent methyltransferases"/>
    <property type="match status" value="1"/>
</dbReference>
<dbReference type="PROSITE" id="PS51608">
    <property type="entry name" value="SAM_MT_UBIE"/>
    <property type="match status" value="1"/>
</dbReference>
<dbReference type="PROSITE" id="PS01183">
    <property type="entry name" value="UBIE_1"/>
    <property type="match status" value="1"/>
</dbReference>
<dbReference type="PROSITE" id="PS01184">
    <property type="entry name" value="UBIE_2"/>
    <property type="match status" value="1"/>
</dbReference>
<accession>A8F2G9</accession>
<proteinExistence type="inferred from homology"/>
<name>UBIE_RICM5</name>
<evidence type="ECO:0000255" key="1">
    <source>
        <dbReference type="HAMAP-Rule" id="MF_01813"/>
    </source>
</evidence>